<feature type="chain" id="PRO_1000184543" description="ATP synthase subunit c">
    <location>
        <begin position="1"/>
        <end position="79"/>
    </location>
</feature>
<feature type="transmembrane region" description="Helical" evidence="1">
    <location>
        <begin position="11"/>
        <end position="31"/>
    </location>
</feature>
<feature type="transmembrane region" description="Helical" evidence="1">
    <location>
        <begin position="53"/>
        <end position="73"/>
    </location>
</feature>
<feature type="site" description="Reversibly protonated during proton transport" evidence="1">
    <location>
        <position position="61"/>
    </location>
</feature>
<proteinExistence type="inferred from homology"/>
<organism>
    <name type="scientific">Yersinia pestis bv. Antiqua (strain Nepal516)</name>
    <dbReference type="NCBI Taxonomy" id="377628"/>
    <lineage>
        <taxon>Bacteria</taxon>
        <taxon>Pseudomonadati</taxon>
        <taxon>Pseudomonadota</taxon>
        <taxon>Gammaproteobacteria</taxon>
        <taxon>Enterobacterales</taxon>
        <taxon>Yersiniaceae</taxon>
        <taxon>Yersinia</taxon>
    </lineage>
</organism>
<accession>Q1CCH0</accession>
<accession>D1Q306</accession>
<gene>
    <name evidence="1" type="primary">atpE</name>
    <name type="ordered locus">YPN_3983</name>
    <name type="ORF">YP516_4519</name>
</gene>
<evidence type="ECO:0000255" key="1">
    <source>
        <dbReference type="HAMAP-Rule" id="MF_01396"/>
    </source>
</evidence>
<sequence>MENLNMDLLYMAAAVMMGLAAIGAAIGIGILGGKFLEGAARQPDLIPLLRTQFFIVMGLVDAIPMIAVGLGLYVMFAVA</sequence>
<protein>
    <recommendedName>
        <fullName evidence="1">ATP synthase subunit c</fullName>
    </recommendedName>
    <alternativeName>
        <fullName evidence="1">ATP synthase F(0) sector subunit c</fullName>
    </alternativeName>
    <alternativeName>
        <fullName evidence="1">F-type ATPase subunit c</fullName>
        <shortName evidence="1">F-ATPase subunit c</shortName>
    </alternativeName>
    <alternativeName>
        <fullName evidence="1">Lipid-binding protein</fullName>
    </alternativeName>
</protein>
<reference key="1">
    <citation type="journal article" date="2006" name="J. Bacteriol.">
        <title>Complete genome sequence of Yersinia pestis strains Antiqua and Nepal516: evidence of gene reduction in an emerging pathogen.</title>
        <authorList>
            <person name="Chain P.S.G."/>
            <person name="Hu P."/>
            <person name="Malfatti S.A."/>
            <person name="Radnedge L."/>
            <person name="Larimer F."/>
            <person name="Vergez L.M."/>
            <person name="Worsham P."/>
            <person name="Chu M.C."/>
            <person name="Andersen G.L."/>
        </authorList>
    </citation>
    <scope>NUCLEOTIDE SEQUENCE [LARGE SCALE GENOMIC DNA]</scope>
    <source>
        <strain>Nepal516</strain>
    </source>
</reference>
<reference key="2">
    <citation type="submission" date="2009-04" db="EMBL/GenBank/DDBJ databases">
        <title>Yersinia pestis Nepal516A whole genome shotgun sequencing project.</title>
        <authorList>
            <person name="Plunkett G. III"/>
            <person name="Anderson B.D."/>
            <person name="Baumler D.J."/>
            <person name="Burland V."/>
            <person name="Cabot E.L."/>
            <person name="Glasner J.D."/>
            <person name="Mau B."/>
            <person name="Neeno-Eckwall E."/>
            <person name="Perna N.T."/>
            <person name="Munk A.C."/>
            <person name="Tapia R."/>
            <person name="Green L.D."/>
            <person name="Rogers Y.C."/>
            <person name="Detter J.C."/>
            <person name="Bruce D.C."/>
            <person name="Brettin T.S."/>
        </authorList>
    </citation>
    <scope>NUCLEOTIDE SEQUENCE [LARGE SCALE GENOMIC DNA]</scope>
    <source>
        <strain>Nepal516</strain>
    </source>
</reference>
<comment type="function">
    <text evidence="1">F(1)F(0) ATP synthase produces ATP from ADP in the presence of a proton or sodium gradient. F-type ATPases consist of two structural domains, F(1) containing the extramembraneous catalytic core and F(0) containing the membrane proton channel, linked together by a central stalk and a peripheral stalk. During catalysis, ATP synthesis in the catalytic domain of F(1) is coupled via a rotary mechanism of the central stalk subunits to proton translocation.</text>
</comment>
<comment type="function">
    <text evidence="1">Key component of the F(0) channel; it plays a direct role in translocation across the membrane. A homomeric c-ring of between 10-14 subunits forms the central stalk rotor element with the F(1) delta and epsilon subunits.</text>
</comment>
<comment type="subunit">
    <text evidence="1">F-type ATPases have 2 components, F(1) - the catalytic core - and F(0) - the membrane proton channel. F(1) has five subunits: alpha(3), beta(3), gamma(1), delta(1), epsilon(1). F(0) has three main subunits: a(1), b(2) and c(10-14). The alpha and beta chains form an alternating ring which encloses part of the gamma chain. F(1) is attached to F(0) by a central stalk formed by the gamma and epsilon chains, while a peripheral stalk is formed by the delta and b chains.</text>
</comment>
<comment type="subcellular location">
    <subcellularLocation>
        <location evidence="1">Cell inner membrane</location>
        <topology evidence="1">Multi-pass membrane protein</topology>
    </subcellularLocation>
</comment>
<comment type="similarity">
    <text evidence="1">Belongs to the ATPase C chain family.</text>
</comment>
<dbReference type="EMBL" id="CP000305">
    <property type="protein sequence ID" value="ABG20310.1"/>
    <property type="molecule type" value="Genomic_DNA"/>
</dbReference>
<dbReference type="EMBL" id="ACNQ01000019">
    <property type="protein sequence ID" value="EEO74909.1"/>
    <property type="molecule type" value="Genomic_DNA"/>
</dbReference>
<dbReference type="RefSeq" id="WP_000429386.1">
    <property type="nucleotide sequence ID" value="NZ_ACNQ01000019.1"/>
</dbReference>
<dbReference type="SMR" id="Q1CCH0"/>
<dbReference type="GeneID" id="98390858"/>
<dbReference type="KEGG" id="ypn:YPN_3983"/>
<dbReference type="HOGENOM" id="CLU_148047_1_0_6"/>
<dbReference type="Proteomes" id="UP000008936">
    <property type="component" value="Chromosome"/>
</dbReference>
<dbReference type="GO" id="GO:0005886">
    <property type="term" value="C:plasma membrane"/>
    <property type="evidence" value="ECO:0007669"/>
    <property type="project" value="UniProtKB-SubCell"/>
</dbReference>
<dbReference type="GO" id="GO:0045259">
    <property type="term" value="C:proton-transporting ATP synthase complex"/>
    <property type="evidence" value="ECO:0007669"/>
    <property type="project" value="UniProtKB-KW"/>
</dbReference>
<dbReference type="GO" id="GO:0033177">
    <property type="term" value="C:proton-transporting two-sector ATPase complex, proton-transporting domain"/>
    <property type="evidence" value="ECO:0007669"/>
    <property type="project" value="InterPro"/>
</dbReference>
<dbReference type="GO" id="GO:0008289">
    <property type="term" value="F:lipid binding"/>
    <property type="evidence" value="ECO:0007669"/>
    <property type="project" value="UniProtKB-KW"/>
</dbReference>
<dbReference type="GO" id="GO:0046933">
    <property type="term" value="F:proton-transporting ATP synthase activity, rotational mechanism"/>
    <property type="evidence" value="ECO:0007669"/>
    <property type="project" value="UniProtKB-UniRule"/>
</dbReference>
<dbReference type="CDD" id="cd18185">
    <property type="entry name" value="ATP-synt_Fo_c_ATPE"/>
    <property type="match status" value="1"/>
</dbReference>
<dbReference type="FunFam" id="1.20.20.10:FF:000002">
    <property type="entry name" value="ATP synthase subunit c"/>
    <property type="match status" value="1"/>
</dbReference>
<dbReference type="Gene3D" id="1.20.20.10">
    <property type="entry name" value="F1F0 ATP synthase subunit C"/>
    <property type="match status" value="1"/>
</dbReference>
<dbReference type="HAMAP" id="MF_01396">
    <property type="entry name" value="ATP_synth_c_bact"/>
    <property type="match status" value="1"/>
</dbReference>
<dbReference type="InterPro" id="IPR005953">
    <property type="entry name" value="ATP_synth_csu_bac/chlpt"/>
</dbReference>
<dbReference type="InterPro" id="IPR000454">
    <property type="entry name" value="ATP_synth_F0_csu"/>
</dbReference>
<dbReference type="InterPro" id="IPR020537">
    <property type="entry name" value="ATP_synth_F0_csu_DDCD_BS"/>
</dbReference>
<dbReference type="InterPro" id="IPR038662">
    <property type="entry name" value="ATP_synth_F0_csu_sf"/>
</dbReference>
<dbReference type="InterPro" id="IPR002379">
    <property type="entry name" value="ATPase_proteolipid_c-like_dom"/>
</dbReference>
<dbReference type="InterPro" id="IPR035921">
    <property type="entry name" value="F/V-ATP_Csub_sf"/>
</dbReference>
<dbReference type="NCBIfam" id="TIGR01260">
    <property type="entry name" value="ATP_synt_c"/>
    <property type="match status" value="1"/>
</dbReference>
<dbReference type="NCBIfam" id="NF005363">
    <property type="entry name" value="PRK06876.1"/>
    <property type="match status" value="1"/>
</dbReference>
<dbReference type="Pfam" id="PF00137">
    <property type="entry name" value="ATP-synt_C"/>
    <property type="match status" value="1"/>
</dbReference>
<dbReference type="PRINTS" id="PR00124">
    <property type="entry name" value="ATPASEC"/>
</dbReference>
<dbReference type="SUPFAM" id="SSF81333">
    <property type="entry name" value="F1F0 ATP synthase subunit C"/>
    <property type="match status" value="1"/>
</dbReference>
<dbReference type="PROSITE" id="PS00605">
    <property type="entry name" value="ATPASE_C"/>
    <property type="match status" value="1"/>
</dbReference>
<name>ATPL_YERPN</name>
<keyword id="KW-0066">ATP synthesis</keyword>
<keyword id="KW-0997">Cell inner membrane</keyword>
<keyword id="KW-1003">Cell membrane</keyword>
<keyword id="KW-0138">CF(0)</keyword>
<keyword id="KW-0375">Hydrogen ion transport</keyword>
<keyword id="KW-0406">Ion transport</keyword>
<keyword id="KW-0446">Lipid-binding</keyword>
<keyword id="KW-0472">Membrane</keyword>
<keyword id="KW-0812">Transmembrane</keyword>
<keyword id="KW-1133">Transmembrane helix</keyword>
<keyword id="KW-0813">Transport</keyword>